<reference key="1">
    <citation type="journal article" date="1997" name="Nature">
        <title>The complete genome sequence of the Gram-positive bacterium Bacillus subtilis.</title>
        <authorList>
            <person name="Kunst F."/>
            <person name="Ogasawara N."/>
            <person name="Moszer I."/>
            <person name="Albertini A.M."/>
            <person name="Alloni G."/>
            <person name="Azevedo V."/>
            <person name="Bertero M.G."/>
            <person name="Bessieres P."/>
            <person name="Bolotin A."/>
            <person name="Borchert S."/>
            <person name="Borriss R."/>
            <person name="Boursier L."/>
            <person name="Brans A."/>
            <person name="Braun M."/>
            <person name="Brignell S.C."/>
            <person name="Bron S."/>
            <person name="Brouillet S."/>
            <person name="Bruschi C.V."/>
            <person name="Caldwell B."/>
            <person name="Capuano V."/>
            <person name="Carter N.M."/>
            <person name="Choi S.-K."/>
            <person name="Codani J.-J."/>
            <person name="Connerton I.F."/>
            <person name="Cummings N.J."/>
            <person name="Daniel R.A."/>
            <person name="Denizot F."/>
            <person name="Devine K.M."/>
            <person name="Duesterhoeft A."/>
            <person name="Ehrlich S.D."/>
            <person name="Emmerson P.T."/>
            <person name="Entian K.-D."/>
            <person name="Errington J."/>
            <person name="Fabret C."/>
            <person name="Ferrari E."/>
            <person name="Foulger D."/>
            <person name="Fritz C."/>
            <person name="Fujita M."/>
            <person name="Fujita Y."/>
            <person name="Fuma S."/>
            <person name="Galizzi A."/>
            <person name="Galleron N."/>
            <person name="Ghim S.-Y."/>
            <person name="Glaser P."/>
            <person name="Goffeau A."/>
            <person name="Golightly E.J."/>
            <person name="Grandi G."/>
            <person name="Guiseppi G."/>
            <person name="Guy B.J."/>
            <person name="Haga K."/>
            <person name="Haiech J."/>
            <person name="Harwood C.R."/>
            <person name="Henaut A."/>
            <person name="Hilbert H."/>
            <person name="Holsappel S."/>
            <person name="Hosono S."/>
            <person name="Hullo M.-F."/>
            <person name="Itaya M."/>
            <person name="Jones L.-M."/>
            <person name="Joris B."/>
            <person name="Karamata D."/>
            <person name="Kasahara Y."/>
            <person name="Klaerr-Blanchard M."/>
            <person name="Klein C."/>
            <person name="Kobayashi Y."/>
            <person name="Koetter P."/>
            <person name="Koningstein G."/>
            <person name="Krogh S."/>
            <person name="Kumano M."/>
            <person name="Kurita K."/>
            <person name="Lapidus A."/>
            <person name="Lardinois S."/>
            <person name="Lauber J."/>
            <person name="Lazarevic V."/>
            <person name="Lee S.-M."/>
            <person name="Levine A."/>
            <person name="Liu H."/>
            <person name="Masuda S."/>
            <person name="Mauel C."/>
            <person name="Medigue C."/>
            <person name="Medina N."/>
            <person name="Mellado R.P."/>
            <person name="Mizuno M."/>
            <person name="Moestl D."/>
            <person name="Nakai S."/>
            <person name="Noback M."/>
            <person name="Noone D."/>
            <person name="O'Reilly M."/>
            <person name="Ogawa K."/>
            <person name="Ogiwara A."/>
            <person name="Oudega B."/>
            <person name="Park S.-H."/>
            <person name="Parro V."/>
            <person name="Pohl T.M."/>
            <person name="Portetelle D."/>
            <person name="Porwollik S."/>
            <person name="Prescott A.M."/>
            <person name="Presecan E."/>
            <person name="Pujic P."/>
            <person name="Purnelle B."/>
            <person name="Rapoport G."/>
            <person name="Rey M."/>
            <person name="Reynolds S."/>
            <person name="Rieger M."/>
            <person name="Rivolta C."/>
            <person name="Rocha E."/>
            <person name="Roche B."/>
            <person name="Rose M."/>
            <person name="Sadaie Y."/>
            <person name="Sato T."/>
            <person name="Scanlan E."/>
            <person name="Schleich S."/>
            <person name="Schroeter R."/>
            <person name="Scoffone F."/>
            <person name="Sekiguchi J."/>
            <person name="Sekowska A."/>
            <person name="Seror S.J."/>
            <person name="Serror P."/>
            <person name="Shin B.-S."/>
            <person name="Soldo B."/>
            <person name="Sorokin A."/>
            <person name="Tacconi E."/>
            <person name="Takagi T."/>
            <person name="Takahashi H."/>
            <person name="Takemaru K."/>
            <person name="Takeuchi M."/>
            <person name="Tamakoshi A."/>
            <person name="Tanaka T."/>
            <person name="Terpstra P."/>
            <person name="Tognoni A."/>
            <person name="Tosato V."/>
            <person name="Uchiyama S."/>
            <person name="Vandenbol M."/>
            <person name="Vannier F."/>
            <person name="Vassarotti A."/>
            <person name="Viari A."/>
            <person name="Wambutt R."/>
            <person name="Wedler E."/>
            <person name="Wedler H."/>
            <person name="Weitzenegger T."/>
            <person name="Winters P."/>
            <person name="Wipat A."/>
            <person name="Yamamoto H."/>
            <person name="Yamane K."/>
            <person name="Yasumoto K."/>
            <person name="Yata K."/>
            <person name="Yoshida K."/>
            <person name="Yoshikawa H.-F."/>
            <person name="Zumstein E."/>
            <person name="Yoshikawa H."/>
            <person name="Danchin A."/>
        </authorList>
    </citation>
    <scope>NUCLEOTIDE SEQUENCE [LARGE SCALE GENOMIC DNA]</scope>
    <source>
        <strain>168</strain>
    </source>
</reference>
<keyword id="KW-0175">Coiled coil</keyword>
<keyword id="KW-1185">Reference proteome</keyword>
<organism>
    <name type="scientific">Bacillus subtilis (strain 168)</name>
    <dbReference type="NCBI Taxonomy" id="224308"/>
    <lineage>
        <taxon>Bacteria</taxon>
        <taxon>Bacillati</taxon>
        <taxon>Bacillota</taxon>
        <taxon>Bacilli</taxon>
        <taxon>Bacillales</taxon>
        <taxon>Bacillaceae</taxon>
        <taxon>Bacillus</taxon>
    </lineage>
</organism>
<proteinExistence type="predicted"/>
<dbReference type="EMBL" id="AL009126">
    <property type="protein sequence ID" value="CAB13931.1"/>
    <property type="molecule type" value="Genomic_DNA"/>
</dbReference>
<dbReference type="RefSeq" id="NP_389921.1">
    <property type="nucleotide sequence ID" value="NC_000964.3"/>
</dbReference>
<dbReference type="RefSeq" id="WP_004399537.1">
    <property type="nucleotide sequence ID" value="NZ_OZ025638.1"/>
</dbReference>
<dbReference type="FunCoup" id="O31907">
    <property type="interactions" value="144"/>
</dbReference>
<dbReference type="STRING" id="224308.BSU20390"/>
<dbReference type="PaxDb" id="224308-BSU20390"/>
<dbReference type="EnsemblBacteria" id="CAB13931">
    <property type="protein sequence ID" value="CAB13931"/>
    <property type="gene ID" value="BSU_20390"/>
</dbReference>
<dbReference type="GeneID" id="939865"/>
<dbReference type="KEGG" id="bsu:BSU20390"/>
<dbReference type="PATRIC" id="fig|224308.179.peg.2229"/>
<dbReference type="eggNOG" id="COG2887">
    <property type="taxonomic scope" value="Bacteria"/>
</dbReference>
<dbReference type="InParanoid" id="O31907"/>
<dbReference type="OrthoDB" id="5413799at2"/>
<dbReference type="BioCyc" id="BSUB:BSU20390-MONOMER"/>
<dbReference type="Proteomes" id="UP000001570">
    <property type="component" value="Chromosome"/>
</dbReference>
<dbReference type="Pfam" id="PF13479">
    <property type="entry name" value="AAA_24"/>
    <property type="match status" value="1"/>
</dbReference>
<evidence type="ECO:0000255" key="1"/>
<name>YORG_BACSU</name>
<feature type="chain" id="PRO_0000360201" description="SPbeta prophage-derived uncharacterized protein YorG">
    <location>
        <begin position="1"/>
        <end position="323"/>
    </location>
</feature>
<feature type="coiled-coil region" evidence="1">
    <location>
        <begin position="222"/>
        <end position="272"/>
    </location>
</feature>
<protein>
    <recommendedName>
        <fullName>SPbeta prophage-derived uncharacterized protein YorG</fullName>
    </recommendedName>
</protein>
<gene>
    <name type="primary">yorG</name>
    <name type="ordered locus">BSU20390</name>
</gene>
<sequence>MAIDIFNPQVSVVAKGLEGKVITIYGSNNLGKTKQSTRMKKPLYLPFEKGLNAIAGVQFMPINSWADFKKVNKQLTKNAEKAKEMYQTIIVDEVDAFAKYATRYVCEQYDVERIKDGNDGFGLWKEYETEVWEEINKLIGVGFTVIFIAHAAEDKKGKVYPKGDKRVLAPVIDNSDIVLYLSSNGVDEDRKVIKSSAWLAETEEHFARSRFDYIDTYLPEFTAENLEKAIIEAVERQEQAEGIVAVTYEEQKQNNASEELDFNSLMDQIKEIGMKLNEEGRLEEVNEITEKHLGKGVKVTECSRKQVGVMSVILDDLKDLLAE</sequence>
<accession>O31907</accession>